<proteinExistence type="inferred from homology"/>
<protein>
    <recommendedName>
        <fullName evidence="1">UPF0154 protein LMOf2365_1324</fullName>
    </recommendedName>
</protein>
<evidence type="ECO:0000255" key="1">
    <source>
        <dbReference type="HAMAP-Rule" id="MF_00363"/>
    </source>
</evidence>
<evidence type="ECO:0000256" key="2">
    <source>
        <dbReference type="SAM" id="MobiDB-lite"/>
    </source>
</evidence>
<reference key="1">
    <citation type="journal article" date="2004" name="Nucleic Acids Res.">
        <title>Whole genome comparisons of serotype 4b and 1/2a strains of the food-borne pathogen Listeria monocytogenes reveal new insights into the core genome components of this species.</title>
        <authorList>
            <person name="Nelson K.E."/>
            <person name="Fouts D.E."/>
            <person name="Mongodin E.F."/>
            <person name="Ravel J."/>
            <person name="DeBoy R.T."/>
            <person name="Kolonay J.F."/>
            <person name="Rasko D.A."/>
            <person name="Angiuoli S.V."/>
            <person name="Gill S.R."/>
            <person name="Paulsen I.T."/>
            <person name="Peterson J.D."/>
            <person name="White O."/>
            <person name="Nelson W.C."/>
            <person name="Nierman W.C."/>
            <person name="Beanan M.J."/>
            <person name="Brinkac L.M."/>
            <person name="Daugherty S.C."/>
            <person name="Dodson R.J."/>
            <person name="Durkin A.S."/>
            <person name="Madupu R."/>
            <person name="Haft D.H."/>
            <person name="Selengut J."/>
            <person name="Van Aken S.E."/>
            <person name="Khouri H.M."/>
            <person name="Fedorova N."/>
            <person name="Forberger H.A."/>
            <person name="Tran B."/>
            <person name="Kathariou S."/>
            <person name="Wonderling L.D."/>
            <person name="Uhlich G.A."/>
            <person name="Bayles D.O."/>
            <person name="Luchansky J.B."/>
            <person name="Fraser C.M."/>
        </authorList>
    </citation>
    <scope>NUCLEOTIDE SEQUENCE [LARGE SCALE GENOMIC DNA]</scope>
    <source>
        <strain>F2365</strain>
    </source>
</reference>
<dbReference type="EMBL" id="AE017262">
    <property type="protein sequence ID" value="AAT04099.1"/>
    <property type="molecule type" value="Genomic_DNA"/>
</dbReference>
<dbReference type="RefSeq" id="WP_003726667.1">
    <property type="nucleotide sequence ID" value="NC_002973.6"/>
</dbReference>
<dbReference type="SMR" id="Q720B5"/>
<dbReference type="KEGG" id="lmf:LMOf2365_1324"/>
<dbReference type="HOGENOM" id="CLU_180108_0_1_9"/>
<dbReference type="GO" id="GO:0005886">
    <property type="term" value="C:plasma membrane"/>
    <property type="evidence" value="ECO:0007669"/>
    <property type="project" value="UniProtKB-UniRule"/>
</dbReference>
<dbReference type="HAMAP" id="MF_00363">
    <property type="entry name" value="UPF0154"/>
    <property type="match status" value="1"/>
</dbReference>
<dbReference type="InterPro" id="IPR005359">
    <property type="entry name" value="UPF0154"/>
</dbReference>
<dbReference type="NCBIfam" id="NF002503">
    <property type="entry name" value="PRK01844.1"/>
    <property type="match status" value="1"/>
</dbReference>
<dbReference type="Pfam" id="PF03672">
    <property type="entry name" value="UPF0154"/>
    <property type="match status" value="1"/>
</dbReference>
<sequence length="79" mass="9201">MWIYILVGIICLLAGLAGGFFIARRYMMSYLKNNPPINEQMLQMMMAQMGQKPSQKKINQMMSAMNKQQEKEKPKKTKK</sequence>
<gene>
    <name type="ordered locus">LMOf2365_1324</name>
</gene>
<organism>
    <name type="scientific">Listeria monocytogenes serotype 4b (strain F2365)</name>
    <dbReference type="NCBI Taxonomy" id="265669"/>
    <lineage>
        <taxon>Bacteria</taxon>
        <taxon>Bacillati</taxon>
        <taxon>Bacillota</taxon>
        <taxon>Bacilli</taxon>
        <taxon>Bacillales</taxon>
        <taxon>Listeriaceae</taxon>
        <taxon>Listeria</taxon>
    </lineage>
</organism>
<comment type="subcellular location">
    <subcellularLocation>
        <location evidence="1">Membrane</location>
        <topology evidence="1">Single-pass membrane protein</topology>
    </subcellularLocation>
</comment>
<comment type="similarity">
    <text evidence="1">Belongs to the UPF0154 family.</text>
</comment>
<keyword id="KW-0472">Membrane</keyword>
<keyword id="KW-0812">Transmembrane</keyword>
<keyword id="KW-1133">Transmembrane helix</keyword>
<name>Y1324_LISMF</name>
<feature type="chain" id="PRO_0000214965" description="UPF0154 protein LMOf2365_1324">
    <location>
        <begin position="1"/>
        <end position="79"/>
    </location>
</feature>
<feature type="transmembrane region" description="Helical" evidence="1">
    <location>
        <begin position="2"/>
        <end position="22"/>
    </location>
</feature>
<feature type="region of interest" description="Disordered" evidence="2">
    <location>
        <begin position="57"/>
        <end position="79"/>
    </location>
</feature>
<feature type="compositionally biased region" description="Polar residues" evidence="2">
    <location>
        <begin position="57"/>
        <end position="66"/>
    </location>
</feature>
<accession>Q720B5</accession>